<accession>B3PUC6</accession>
<comment type="similarity">
    <text evidence="1">Belongs to the UPF0303 family.</text>
</comment>
<evidence type="ECO:0000255" key="1">
    <source>
        <dbReference type="HAMAP-Rule" id="MF_00761"/>
    </source>
</evidence>
<name>Y3058_RHIE6</name>
<protein>
    <recommendedName>
        <fullName evidence="1">UPF0303 protein RHECIAT_CH0003058</fullName>
    </recommendedName>
</protein>
<gene>
    <name type="ordered locus">RHECIAT_CH0003058</name>
</gene>
<sequence>MTLDDDLNRIAEQEKELSFDAFDLTTAWQLGKLLQELATERCLGVAIDVTLHSMPVFYAALPGVTPDNVNWVRRKRNMVFRYFRSSYASGLKLKKDGKTVEDNGLSGDDYAPHGGSFPINVKGTGCIGAVTVSGLPQRDDHNLVVEALALMLAKDLDTLRLAPL</sequence>
<dbReference type="EMBL" id="CP001074">
    <property type="protein sequence ID" value="ACE92007.1"/>
    <property type="molecule type" value="Genomic_DNA"/>
</dbReference>
<dbReference type="SMR" id="B3PUC6"/>
<dbReference type="KEGG" id="rec:RHECIAT_CH0003058"/>
<dbReference type="eggNOG" id="COG4702">
    <property type="taxonomic scope" value="Bacteria"/>
</dbReference>
<dbReference type="HOGENOM" id="CLU_101036_2_1_5"/>
<dbReference type="Proteomes" id="UP000008817">
    <property type="component" value="Chromosome"/>
</dbReference>
<dbReference type="Gene3D" id="3.30.450.150">
    <property type="entry name" value="Haem-degrading domain"/>
    <property type="match status" value="1"/>
</dbReference>
<dbReference type="HAMAP" id="MF_00761">
    <property type="entry name" value="UPF0303"/>
    <property type="match status" value="1"/>
</dbReference>
<dbReference type="InterPro" id="IPR005624">
    <property type="entry name" value="PduO/GlcC-like"/>
</dbReference>
<dbReference type="InterPro" id="IPR038084">
    <property type="entry name" value="PduO/GlcC-like_sf"/>
</dbReference>
<dbReference type="InterPro" id="IPR010371">
    <property type="entry name" value="YBR137W-like"/>
</dbReference>
<dbReference type="NCBIfam" id="NF002696">
    <property type="entry name" value="PRK02487.1-5"/>
    <property type="match status" value="1"/>
</dbReference>
<dbReference type="PANTHER" id="PTHR28255">
    <property type="match status" value="1"/>
</dbReference>
<dbReference type="PANTHER" id="PTHR28255:SF1">
    <property type="entry name" value="UPF0303 PROTEIN YBR137W"/>
    <property type="match status" value="1"/>
</dbReference>
<dbReference type="Pfam" id="PF03928">
    <property type="entry name" value="HbpS-like"/>
    <property type="match status" value="1"/>
</dbReference>
<dbReference type="PIRSF" id="PIRSF008757">
    <property type="entry name" value="UCP008757"/>
    <property type="match status" value="1"/>
</dbReference>
<dbReference type="SUPFAM" id="SSF143744">
    <property type="entry name" value="GlcG-like"/>
    <property type="match status" value="1"/>
</dbReference>
<feature type="chain" id="PRO_1000198327" description="UPF0303 protein RHECIAT_CH0003058">
    <location>
        <begin position="1"/>
        <end position="164"/>
    </location>
</feature>
<proteinExistence type="inferred from homology"/>
<organism>
    <name type="scientific">Rhizobium etli (strain CIAT 652)</name>
    <dbReference type="NCBI Taxonomy" id="491916"/>
    <lineage>
        <taxon>Bacteria</taxon>
        <taxon>Pseudomonadati</taxon>
        <taxon>Pseudomonadota</taxon>
        <taxon>Alphaproteobacteria</taxon>
        <taxon>Hyphomicrobiales</taxon>
        <taxon>Rhizobiaceae</taxon>
        <taxon>Rhizobium/Agrobacterium group</taxon>
        <taxon>Rhizobium</taxon>
    </lineage>
</organism>
<reference key="1">
    <citation type="journal article" date="2010" name="Appl. Environ. Microbiol.">
        <title>Conserved symbiotic plasmid DNA sequences in the multireplicon pangenomic structure of Rhizobium etli.</title>
        <authorList>
            <person name="Gonzalez V."/>
            <person name="Acosta J.L."/>
            <person name="Santamaria R.I."/>
            <person name="Bustos P."/>
            <person name="Fernandez J.L."/>
            <person name="Hernandez Gonzalez I.L."/>
            <person name="Diaz R."/>
            <person name="Flores M."/>
            <person name="Palacios R."/>
            <person name="Mora J."/>
            <person name="Davila G."/>
        </authorList>
    </citation>
    <scope>NUCLEOTIDE SEQUENCE [LARGE SCALE GENOMIC DNA]</scope>
    <source>
        <strain>CIAT 652</strain>
    </source>
</reference>